<name>RL24E_PYRFU</name>
<gene>
    <name evidence="1" type="primary">rpl24e</name>
    <name type="ordered locus">PF1369</name>
</gene>
<sequence>MARWNVCSYCGKPFEPGTGKMYVRNDGRVLFFCSRKCERYYFMGRNPRKLKWTKAYQEARLQRGGE</sequence>
<proteinExistence type="evidence at protein level"/>
<dbReference type="EMBL" id="AE009950">
    <property type="protein sequence ID" value="AAL81493.1"/>
    <property type="molecule type" value="Genomic_DNA"/>
</dbReference>
<dbReference type="RefSeq" id="WP_011012516.1">
    <property type="nucleotide sequence ID" value="NZ_CP023154.1"/>
</dbReference>
<dbReference type="PDB" id="4V4N">
    <property type="method" value="EM"/>
    <property type="resolution" value="9.00 A"/>
    <property type="chains" value="V=1-66"/>
</dbReference>
<dbReference type="PDB" id="4V6U">
    <property type="method" value="EM"/>
    <property type="resolution" value="6.60 A"/>
    <property type="chains" value="BV=1-66"/>
</dbReference>
<dbReference type="PDBsum" id="4V4N"/>
<dbReference type="PDBsum" id="4V6U"/>
<dbReference type="SMR" id="Q8U158"/>
<dbReference type="STRING" id="186497.PF1369"/>
<dbReference type="PaxDb" id="186497-PF1369"/>
<dbReference type="KEGG" id="pfu:PF1369"/>
<dbReference type="PATRIC" id="fig|186497.12.peg.1432"/>
<dbReference type="eggNOG" id="arCOG01950">
    <property type="taxonomic scope" value="Archaea"/>
</dbReference>
<dbReference type="HOGENOM" id="CLU_190191_0_0_2"/>
<dbReference type="OrthoDB" id="55506at2157"/>
<dbReference type="PhylomeDB" id="Q8U158"/>
<dbReference type="Proteomes" id="UP000001013">
    <property type="component" value="Chromosome"/>
</dbReference>
<dbReference type="GO" id="GO:1990904">
    <property type="term" value="C:ribonucleoprotein complex"/>
    <property type="evidence" value="ECO:0007669"/>
    <property type="project" value="UniProtKB-KW"/>
</dbReference>
<dbReference type="GO" id="GO:0005840">
    <property type="term" value="C:ribosome"/>
    <property type="evidence" value="ECO:0007669"/>
    <property type="project" value="UniProtKB-KW"/>
</dbReference>
<dbReference type="GO" id="GO:0019843">
    <property type="term" value="F:rRNA binding"/>
    <property type="evidence" value="ECO:0007669"/>
    <property type="project" value="UniProtKB-UniRule"/>
</dbReference>
<dbReference type="GO" id="GO:0003735">
    <property type="term" value="F:structural constituent of ribosome"/>
    <property type="evidence" value="ECO:0007669"/>
    <property type="project" value="InterPro"/>
</dbReference>
<dbReference type="GO" id="GO:0008270">
    <property type="term" value="F:zinc ion binding"/>
    <property type="evidence" value="ECO:0007669"/>
    <property type="project" value="UniProtKB-UniRule"/>
</dbReference>
<dbReference type="GO" id="GO:0006412">
    <property type="term" value="P:translation"/>
    <property type="evidence" value="ECO:0007669"/>
    <property type="project" value="UniProtKB-UniRule"/>
</dbReference>
<dbReference type="CDD" id="cd00472">
    <property type="entry name" value="Ribosomal_L24e_L24"/>
    <property type="match status" value="1"/>
</dbReference>
<dbReference type="FunFam" id="2.30.170.20:FF:000001">
    <property type="entry name" value="probable ribosome biogenesis protein RLP24"/>
    <property type="match status" value="1"/>
</dbReference>
<dbReference type="Gene3D" id="2.30.170.20">
    <property type="entry name" value="Ribosomal protein L24e"/>
    <property type="match status" value="1"/>
</dbReference>
<dbReference type="HAMAP" id="MF_00773">
    <property type="entry name" value="Ribosomal_eL24"/>
    <property type="match status" value="1"/>
</dbReference>
<dbReference type="InterPro" id="IPR038630">
    <property type="entry name" value="L24e/L24_sf"/>
</dbReference>
<dbReference type="InterPro" id="IPR056366">
    <property type="entry name" value="Ribosomal_eL24"/>
</dbReference>
<dbReference type="InterPro" id="IPR055345">
    <property type="entry name" value="Ribosomal_eL24-rel_arc"/>
</dbReference>
<dbReference type="InterPro" id="IPR000988">
    <property type="entry name" value="Ribosomal_eL24-rel_N"/>
</dbReference>
<dbReference type="InterPro" id="IPR023442">
    <property type="entry name" value="Ribosomal_eL24_CS"/>
</dbReference>
<dbReference type="InterPro" id="IPR011017">
    <property type="entry name" value="TRASH_dom"/>
</dbReference>
<dbReference type="NCBIfam" id="NF034186">
    <property type="entry name" value="PRK14891.1-1"/>
    <property type="match status" value="1"/>
</dbReference>
<dbReference type="PANTHER" id="PTHR10792">
    <property type="entry name" value="60S RIBOSOMAL PROTEIN L24"/>
    <property type="match status" value="1"/>
</dbReference>
<dbReference type="PANTHER" id="PTHR10792:SF1">
    <property type="entry name" value="RIBOSOMAL PROTEIN L24"/>
    <property type="match status" value="1"/>
</dbReference>
<dbReference type="Pfam" id="PF01246">
    <property type="entry name" value="Ribosomal_L24e"/>
    <property type="match status" value="1"/>
</dbReference>
<dbReference type="SMART" id="SM00746">
    <property type="entry name" value="TRASH"/>
    <property type="match status" value="1"/>
</dbReference>
<dbReference type="SUPFAM" id="SSF57716">
    <property type="entry name" value="Glucocorticoid receptor-like (DNA-binding domain)"/>
    <property type="match status" value="1"/>
</dbReference>
<dbReference type="PROSITE" id="PS01073">
    <property type="entry name" value="RIBOSOMAL_L24E"/>
    <property type="match status" value="1"/>
</dbReference>
<evidence type="ECO:0000255" key="1">
    <source>
        <dbReference type="HAMAP-Rule" id="MF_00773"/>
    </source>
</evidence>
<evidence type="ECO:0000269" key="2">
    <source>
    </source>
</evidence>
<evidence type="ECO:0007744" key="3">
    <source>
        <dbReference type="PDB" id="4V6U"/>
    </source>
</evidence>
<organism>
    <name type="scientific">Pyrococcus furiosus (strain ATCC 43587 / DSM 3638 / JCM 8422 / Vc1)</name>
    <dbReference type="NCBI Taxonomy" id="186497"/>
    <lineage>
        <taxon>Archaea</taxon>
        <taxon>Methanobacteriati</taxon>
        <taxon>Methanobacteriota</taxon>
        <taxon>Thermococci</taxon>
        <taxon>Thermococcales</taxon>
        <taxon>Thermococcaceae</taxon>
        <taxon>Pyrococcus</taxon>
    </lineage>
</organism>
<comment type="function">
    <text evidence="1">Binds to the 23S rRNA.</text>
</comment>
<comment type="cofactor">
    <cofactor evidence="1">
        <name>Zn(2+)</name>
        <dbReference type="ChEBI" id="CHEBI:29105"/>
    </cofactor>
    <text evidence="1">Binds 1 zinc ion per subunit.</text>
</comment>
<comment type="subunit">
    <text evidence="1 2">Part of the 50S ribosomal subunit (PubMed:23222135). Forms a cluster with proteins L3 and L14.</text>
</comment>
<comment type="similarity">
    <text evidence="1">Belongs to the eukaryotic ribosomal protein eL24 family.</text>
</comment>
<keyword id="KW-0002">3D-structure</keyword>
<keyword id="KW-0479">Metal-binding</keyword>
<keyword id="KW-1185">Reference proteome</keyword>
<keyword id="KW-0687">Ribonucleoprotein</keyword>
<keyword id="KW-0689">Ribosomal protein</keyword>
<keyword id="KW-0694">RNA-binding</keyword>
<keyword id="KW-0699">rRNA-binding</keyword>
<keyword id="KW-0862">Zinc</keyword>
<keyword id="KW-0863">Zinc-finger</keyword>
<feature type="chain" id="PRO_0000136924" description="Large ribosomal subunit protein eL24">
    <location>
        <begin position="1"/>
        <end position="66"/>
    </location>
</feature>
<feature type="zinc finger region" description="C4-type" evidence="1">
    <location>
        <begin position="7"/>
        <end position="37"/>
    </location>
</feature>
<feature type="binding site" evidence="1">
    <location>
        <position position="7"/>
    </location>
    <ligand>
        <name>Zn(2+)</name>
        <dbReference type="ChEBI" id="CHEBI:29105"/>
    </ligand>
</feature>
<feature type="binding site" evidence="1">
    <location>
        <position position="10"/>
    </location>
    <ligand>
        <name>Zn(2+)</name>
        <dbReference type="ChEBI" id="CHEBI:29105"/>
    </ligand>
</feature>
<feature type="binding site" evidence="1">
    <location>
        <position position="33"/>
    </location>
    <ligand>
        <name>Zn(2+)</name>
        <dbReference type="ChEBI" id="CHEBI:29105"/>
    </ligand>
</feature>
<feature type="binding site" evidence="1">
    <location>
        <position position="37"/>
    </location>
    <ligand>
        <name>Zn(2+)</name>
        <dbReference type="ChEBI" id="CHEBI:29105"/>
    </ligand>
</feature>
<reference key="1">
    <citation type="journal article" date="1999" name="Genetics">
        <title>Divergence of the hyperthermophilic archaea Pyrococcus furiosus and P. horikoshii inferred from complete genomic sequences.</title>
        <authorList>
            <person name="Maeder D.L."/>
            <person name="Weiss R.B."/>
            <person name="Dunn D.M."/>
            <person name="Cherry J.L."/>
            <person name="Gonzalez J.M."/>
            <person name="DiRuggiero J."/>
            <person name="Robb F.T."/>
        </authorList>
    </citation>
    <scope>NUCLEOTIDE SEQUENCE [LARGE SCALE GENOMIC DNA]</scope>
    <source>
        <strain>ATCC 43587 / DSM 3638 / JCM 8422 / Vc1</strain>
    </source>
</reference>
<reference evidence="3" key="2">
    <citation type="journal article" date="2013" name="Nucleic Acids Res.">
        <title>Promiscuous behaviour of archaeal ribosomal proteins: implications for eukaryotic ribosome evolution.</title>
        <authorList>
            <person name="Armache J.P."/>
            <person name="Anger A.M."/>
            <person name="Marquez V."/>
            <person name="Franckenberg S."/>
            <person name="Frohlich T."/>
            <person name="Villa E."/>
            <person name="Berninghausen O."/>
            <person name="Thomm M."/>
            <person name="Arnold G.J."/>
            <person name="Beckmann R."/>
            <person name="Wilson D.N."/>
        </authorList>
    </citation>
    <scope>STRUCTURE BY ELECTRON MICROSCOPY (6.60 ANGSTROMS) IN THE 70S RIBOSOME</scope>
    <scope>SUBUNIT</scope>
</reference>
<accession>Q8U158</accession>
<protein>
    <recommendedName>
        <fullName evidence="1">Large ribosomal subunit protein eL24</fullName>
    </recommendedName>
    <alternativeName>
        <fullName>50S ribosomal protein L24e</fullName>
    </alternativeName>
</protein>